<keyword id="KW-0903">Direct protein sequencing</keyword>
<keyword id="KW-1015">Disulfide bond</keyword>
<keyword id="KW-0872">Ion channel impairing toxin</keyword>
<keyword id="KW-0960">Knottin</keyword>
<keyword id="KW-0964">Secreted</keyword>
<keyword id="KW-0732">Signal</keyword>
<keyword id="KW-0800">Toxin</keyword>
<name>H16A2_CYRHA</name>
<proteinExistence type="evidence at protein level"/>
<sequence length="113" mass="13057">MNTVRVTFLLVFVLAVSLGQADKDENRMEVQEKTEQGKSYLDFAENLLLQKLEELEAKLLEEDSEESRNSRQKRCIGEGVPCDENDPRCCSGLVCLKPTLHGIWYKSYYCYKK</sequence>
<accession>D2Y254</accession>
<dbReference type="EMBL" id="GU292931">
    <property type="protein sequence ID" value="ADB56747.1"/>
    <property type="molecule type" value="mRNA"/>
</dbReference>
<dbReference type="ArachnoServer" id="AS001592">
    <property type="toxin name" value="U11-theraphotoxin-Hhn1a"/>
</dbReference>
<dbReference type="GO" id="GO:0005576">
    <property type="term" value="C:extracellular region"/>
    <property type="evidence" value="ECO:0007669"/>
    <property type="project" value="UniProtKB-SubCell"/>
</dbReference>
<dbReference type="GO" id="GO:0019871">
    <property type="term" value="F:sodium channel inhibitor activity"/>
    <property type="evidence" value="ECO:0007669"/>
    <property type="project" value="InterPro"/>
</dbReference>
<dbReference type="GO" id="GO:0090729">
    <property type="term" value="F:toxin activity"/>
    <property type="evidence" value="ECO:0007669"/>
    <property type="project" value="UniProtKB-KW"/>
</dbReference>
<dbReference type="InterPro" id="IPR012627">
    <property type="entry name" value="Toxin_22"/>
</dbReference>
<dbReference type="Pfam" id="PF08092">
    <property type="entry name" value="Toxin_22"/>
    <property type="match status" value="1"/>
</dbReference>
<comment type="function">
    <text evidence="1">Probable ion channel inhibitor.</text>
</comment>
<comment type="subcellular location">
    <subcellularLocation>
        <location>Secreted</location>
    </subcellularLocation>
</comment>
<comment type="tissue specificity">
    <text>Expressed by the venom gland.</text>
</comment>
<comment type="domain">
    <text evidence="1">The presence of a 'disulfide through disulfide knot' structurally defines this protein as a knottin.</text>
</comment>
<comment type="similarity">
    <text evidence="5">Belongs to the neurotoxin 14 (magi-1) family. 01 (HNTX-16) subfamily.</text>
</comment>
<evidence type="ECO:0000250" key="1"/>
<evidence type="ECO:0000255" key="2"/>
<evidence type="ECO:0000256" key="3">
    <source>
        <dbReference type="SAM" id="MobiDB-lite"/>
    </source>
</evidence>
<evidence type="ECO:0000269" key="4">
    <source>
    </source>
</evidence>
<evidence type="ECO:0000305" key="5"/>
<organism>
    <name type="scientific">Cyriopagopus hainanus</name>
    <name type="common">Chinese bird spider</name>
    <name type="synonym">Haplopelma hainanum</name>
    <dbReference type="NCBI Taxonomy" id="209901"/>
    <lineage>
        <taxon>Eukaryota</taxon>
        <taxon>Metazoa</taxon>
        <taxon>Ecdysozoa</taxon>
        <taxon>Arthropoda</taxon>
        <taxon>Chelicerata</taxon>
        <taxon>Arachnida</taxon>
        <taxon>Araneae</taxon>
        <taxon>Mygalomorphae</taxon>
        <taxon>Theraphosidae</taxon>
        <taxon>Haplopelma</taxon>
    </lineage>
</organism>
<protein>
    <recommendedName>
        <fullName>U11-theraphotoxin-Hhn1a</fullName>
        <shortName>U11-TRTX-Hhn1a</shortName>
    </recommendedName>
    <alternativeName>
        <fullName>Hainantoxin-XVI.2</fullName>
        <shortName>HNTX-XVI.2</shortName>
    </alternativeName>
    <alternativeName>
        <fullName>Peptide F4-19.87</fullName>
    </alternativeName>
</protein>
<feature type="signal peptide" evidence="2">
    <location>
        <begin position="1"/>
        <end position="21"/>
    </location>
</feature>
<feature type="propeptide" id="PRO_0000400859" evidence="4">
    <location>
        <begin position="22"/>
        <end position="74"/>
    </location>
</feature>
<feature type="peptide" id="PRO_0000400860" description="U11-theraphotoxin-Hhn1a">
    <location>
        <begin position="75"/>
        <end position="113"/>
    </location>
</feature>
<feature type="region of interest" description="Disordered" evidence="3">
    <location>
        <begin position="61"/>
        <end position="83"/>
    </location>
</feature>
<feature type="disulfide bond" evidence="1">
    <location>
        <begin position="75"/>
        <end position="90"/>
    </location>
</feature>
<feature type="disulfide bond" evidence="1">
    <location>
        <begin position="82"/>
        <end position="95"/>
    </location>
</feature>
<feature type="disulfide bond" evidence="1">
    <location>
        <begin position="89"/>
        <end position="110"/>
    </location>
</feature>
<reference key="1">
    <citation type="journal article" date="2010" name="J. Proteome Res.">
        <title>Molecular diversification of peptide toxins from the tarantula Haplopelma hainanum (Ornithoctonus hainana) venom based on transcriptomic, peptidomic, and genomic analyses.</title>
        <authorList>
            <person name="Tang X."/>
            <person name="Zhang Y."/>
            <person name="Hu W."/>
            <person name="Xu D."/>
            <person name="Tao H."/>
            <person name="Yang X."/>
            <person name="Li Y."/>
            <person name="Jiang L."/>
            <person name="Liang S."/>
        </authorList>
    </citation>
    <scope>NUCLEOTIDE SEQUENCE [LARGE SCALE MRNA]</scope>
    <scope>PROTEIN SEQUENCE OF 75-113</scope>
    <scope>IDENTIFICATION BY MASS SPECTROMETRY</scope>
    <source>
        <tissue>Venom</tissue>
        <tissue>Venom gland</tissue>
    </source>
</reference>